<sequence length="113" mass="13578">MRHYEIIFMVHPDQSDKIPLLIEKYKKIINDNNGIIHRLEDWGRRQLSYSINKLQKAHYILMNIEVFPKTITLLETDFRFNNIILRNMIMSVKKAIVELSPILKLKDDKKEKK</sequence>
<accession>P57627</accession>
<reference key="1">
    <citation type="journal article" date="2000" name="Nature">
        <title>Genome sequence of the endocellular bacterial symbiont of aphids Buchnera sp. APS.</title>
        <authorList>
            <person name="Shigenobu S."/>
            <person name="Watanabe H."/>
            <person name="Hattori M."/>
            <person name="Sakaki Y."/>
            <person name="Ishikawa H."/>
        </authorList>
    </citation>
    <scope>NUCLEOTIDE SEQUENCE [LARGE SCALE GENOMIC DNA]</scope>
    <source>
        <strain>APS</strain>
    </source>
</reference>
<name>RS6_BUCAI</name>
<evidence type="ECO:0000250" key="1"/>
<evidence type="ECO:0000305" key="2"/>
<comment type="function">
    <text evidence="1">Binds together with bS18 to 16S ribosomal RNA.</text>
</comment>
<comment type="similarity">
    <text evidence="2">Belongs to the bacterial ribosomal protein bS6 family.</text>
</comment>
<gene>
    <name type="primary">rpsF</name>
    <name type="ordered locus">BU564</name>
</gene>
<protein>
    <recommendedName>
        <fullName evidence="2">Small ribosomal subunit protein bS6</fullName>
    </recommendedName>
    <alternativeName>
        <fullName>30S ribosomal protein S6</fullName>
    </alternativeName>
</protein>
<dbReference type="EMBL" id="BA000003">
    <property type="protein sequence ID" value="BAB13254.1"/>
    <property type="molecule type" value="Genomic_DNA"/>
</dbReference>
<dbReference type="RefSeq" id="NP_240368.1">
    <property type="nucleotide sequence ID" value="NC_002528.1"/>
</dbReference>
<dbReference type="RefSeq" id="WP_009874512.1">
    <property type="nucleotide sequence ID" value="NZ_AP036055.1"/>
</dbReference>
<dbReference type="SMR" id="P57627"/>
<dbReference type="STRING" id="563178.BUAP5A_557"/>
<dbReference type="EnsemblBacteria" id="BAB13254">
    <property type="protein sequence ID" value="BAB13254"/>
    <property type="gene ID" value="BAB13254"/>
</dbReference>
<dbReference type="KEGG" id="buc:BU564"/>
<dbReference type="PATRIC" id="fig|107806.10.peg.567"/>
<dbReference type="eggNOG" id="COG0360">
    <property type="taxonomic scope" value="Bacteria"/>
</dbReference>
<dbReference type="HOGENOM" id="CLU_113441_6_1_6"/>
<dbReference type="Proteomes" id="UP000001806">
    <property type="component" value="Chromosome"/>
</dbReference>
<dbReference type="GO" id="GO:0022627">
    <property type="term" value="C:cytosolic small ribosomal subunit"/>
    <property type="evidence" value="ECO:0007669"/>
    <property type="project" value="TreeGrafter"/>
</dbReference>
<dbReference type="GO" id="GO:0070181">
    <property type="term" value="F:small ribosomal subunit rRNA binding"/>
    <property type="evidence" value="ECO:0007669"/>
    <property type="project" value="TreeGrafter"/>
</dbReference>
<dbReference type="GO" id="GO:0003735">
    <property type="term" value="F:structural constituent of ribosome"/>
    <property type="evidence" value="ECO:0007669"/>
    <property type="project" value="InterPro"/>
</dbReference>
<dbReference type="GO" id="GO:0006412">
    <property type="term" value="P:translation"/>
    <property type="evidence" value="ECO:0007669"/>
    <property type="project" value="UniProtKB-UniRule"/>
</dbReference>
<dbReference type="CDD" id="cd00473">
    <property type="entry name" value="bS6"/>
    <property type="match status" value="1"/>
</dbReference>
<dbReference type="Gene3D" id="3.30.70.60">
    <property type="match status" value="1"/>
</dbReference>
<dbReference type="HAMAP" id="MF_00360">
    <property type="entry name" value="Ribosomal_bS6"/>
    <property type="match status" value="1"/>
</dbReference>
<dbReference type="InterPro" id="IPR000529">
    <property type="entry name" value="Ribosomal_bS6"/>
</dbReference>
<dbReference type="InterPro" id="IPR020815">
    <property type="entry name" value="Ribosomal_bS6_CS"/>
</dbReference>
<dbReference type="InterPro" id="IPR035980">
    <property type="entry name" value="Ribosomal_bS6_sf"/>
</dbReference>
<dbReference type="InterPro" id="IPR020814">
    <property type="entry name" value="Ribosomal_S6_plastid/chlpt"/>
</dbReference>
<dbReference type="InterPro" id="IPR014717">
    <property type="entry name" value="Transl_elong_EF1B/ribsomal_bS6"/>
</dbReference>
<dbReference type="NCBIfam" id="TIGR00166">
    <property type="entry name" value="S6"/>
    <property type="match status" value="1"/>
</dbReference>
<dbReference type="PANTHER" id="PTHR21011">
    <property type="entry name" value="MITOCHONDRIAL 28S RIBOSOMAL PROTEIN S6"/>
    <property type="match status" value="1"/>
</dbReference>
<dbReference type="PANTHER" id="PTHR21011:SF1">
    <property type="entry name" value="SMALL RIBOSOMAL SUBUNIT PROTEIN BS6M"/>
    <property type="match status" value="1"/>
</dbReference>
<dbReference type="Pfam" id="PF01250">
    <property type="entry name" value="Ribosomal_S6"/>
    <property type="match status" value="1"/>
</dbReference>
<dbReference type="SUPFAM" id="SSF54995">
    <property type="entry name" value="Ribosomal protein S6"/>
    <property type="match status" value="1"/>
</dbReference>
<dbReference type="PROSITE" id="PS01048">
    <property type="entry name" value="RIBOSOMAL_S6"/>
    <property type="match status" value="1"/>
</dbReference>
<proteinExistence type="inferred from homology"/>
<keyword id="KW-1185">Reference proteome</keyword>
<keyword id="KW-0687">Ribonucleoprotein</keyword>
<keyword id="KW-0689">Ribosomal protein</keyword>
<keyword id="KW-0694">RNA-binding</keyword>
<keyword id="KW-0699">rRNA-binding</keyword>
<feature type="chain" id="PRO_0000176740" description="Small ribosomal subunit protein bS6">
    <location>
        <begin position="1"/>
        <end position="113"/>
    </location>
</feature>
<organism>
    <name type="scientific">Buchnera aphidicola subsp. Acyrthosiphon pisum (strain APS)</name>
    <name type="common">Acyrthosiphon pisum symbiotic bacterium</name>
    <dbReference type="NCBI Taxonomy" id="107806"/>
    <lineage>
        <taxon>Bacteria</taxon>
        <taxon>Pseudomonadati</taxon>
        <taxon>Pseudomonadota</taxon>
        <taxon>Gammaproteobacteria</taxon>
        <taxon>Enterobacterales</taxon>
        <taxon>Erwiniaceae</taxon>
        <taxon>Buchnera</taxon>
    </lineage>
</organism>